<feature type="chain" id="PRO_0000103150" description="4-hydroxy-tetrahydrodipicolinate synthase">
    <location>
        <begin position="1"/>
        <end position="292"/>
    </location>
</feature>
<feature type="active site" description="Proton donor/acceptor" evidence="1">
    <location>
        <position position="133"/>
    </location>
</feature>
<feature type="active site" description="Schiff-base intermediate with substrate" evidence="1">
    <location>
        <position position="161"/>
    </location>
</feature>
<feature type="binding site" evidence="1">
    <location>
        <position position="45"/>
    </location>
    <ligand>
        <name>pyruvate</name>
        <dbReference type="ChEBI" id="CHEBI:15361"/>
    </ligand>
</feature>
<feature type="binding site" evidence="1">
    <location>
        <position position="203"/>
    </location>
    <ligand>
        <name>pyruvate</name>
        <dbReference type="ChEBI" id="CHEBI:15361"/>
    </ligand>
</feature>
<feature type="site" description="Part of a proton relay during catalysis" evidence="1">
    <location>
        <position position="44"/>
    </location>
</feature>
<feature type="site" description="Part of a proton relay during catalysis" evidence="1">
    <location>
        <position position="107"/>
    </location>
</feature>
<feature type="strand" evidence="3">
    <location>
        <begin position="3"/>
        <end position="8"/>
    </location>
</feature>
<feature type="helix" evidence="3">
    <location>
        <begin position="21"/>
        <end position="33"/>
    </location>
</feature>
<feature type="strand" evidence="3">
    <location>
        <begin position="38"/>
        <end position="43"/>
    </location>
</feature>
<feature type="turn" evidence="3">
    <location>
        <begin position="44"/>
        <end position="47"/>
    </location>
</feature>
<feature type="helix" evidence="3">
    <location>
        <begin position="48"/>
        <end position="50"/>
    </location>
</feature>
<feature type="helix" evidence="3">
    <location>
        <begin position="53"/>
        <end position="67"/>
    </location>
</feature>
<feature type="strand" evidence="3">
    <location>
        <begin position="73"/>
        <end position="76"/>
    </location>
</feature>
<feature type="helix" evidence="3">
    <location>
        <begin position="82"/>
        <end position="90"/>
    </location>
</feature>
<feature type="turn" evidence="3">
    <location>
        <begin position="91"/>
        <end position="94"/>
    </location>
</feature>
<feature type="strand" evidence="3">
    <location>
        <begin position="99"/>
        <end position="103"/>
    </location>
</feature>
<feature type="helix" evidence="3">
    <location>
        <begin position="112"/>
        <end position="124"/>
    </location>
</feature>
<feature type="strand" evidence="3">
    <location>
        <begin position="130"/>
        <end position="134"/>
    </location>
</feature>
<feature type="helix" evidence="3">
    <location>
        <begin position="136"/>
        <end position="139"/>
    </location>
</feature>
<feature type="helix" evidence="3">
    <location>
        <begin position="145"/>
        <end position="152"/>
    </location>
</feature>
<feature type="strand" evidence="3">
    <location>
        <begin position="157"/>
        <end position="162"/>
    </location>
</feature>
<feature type="helix" evidence="3">
    <location>
        <begin position="169"/>
        <end position="174"/>
    </location>
</feature>
<feature type="strand" evidence="3">
    <location>
        <begin position="182"/>
        <end position="186"/>
    </location>
</feature>
<feature type="helix" evidence="3">
    <location>
        <begin position="188"/>
        <end position="190"/>
    </location>
</feature>
<feature type="helix" evidence="3">
    <location>
        <begin position="191"/>
        <end position="196"/>
    </location>
</feature>
<feature type="strand" evidence="3">
    <location>
        <begin position="201"/>
        <end position="205"/>
    </location>
</feature>
<feature type="helix" evidence="3">
    <location>
        <begin position="206"/>
        <end position="208"/>
    </location>
</feature>
<feature type="helix" evidence="3">
    <location>
        <begin position="211"/>
        <end position="222"/>
    </location>
</feature>
<feature type="helix" evidence="3">
    <location>
        <begin position="226"/>
        <end position="242"/>
    </location>
</feature>
<feature type="strand" evidence="3">
    <location>
        <begin position="245"/>
        <end position="247"/>
    </location>
</feature>
<feature type="helix" evidence="3">
    <location>
        <begin position="250"/>
        <end position="258"/>
    </location>
</feature>
<feature type="strand" evidence="3">
    <location>
        <begin position="261"/>
        <end position="263"/>
    </location>
</feature>
<feature type="helix" evidence="3">
    <location>
        <begin position="276"/>
        <end position="288"/>
    </location>
</feature>
<dbReference type="EC" id="4.3.3.7" evidence="1"/>
<dbReference type="EMBL" id="AE006468">
    <property type="protein sequence ID" value="AAL21383.1"/>
    <property type="molecule type" value="Genomic_DNA"/>
</dbReference>
<dbReference type="RefSeq" id="NP_461424.1">
    <property type="nucleotide sequence ID" value="NC_003197.2"/>
</dbReference>
<dbReference type="RefSeq" id="WP_000494020.1">
    <property type="nucleotide sequence ID" value="NC_003197.2"/>
</dbReference>
<dbReference type="PDB" id="3G0S">
    <property type="method" value="X-ray"/>
    <property type="resolution" value="1.85 A"/>
    <property type="chains" value="A/B=1-292"/>
</dbReference>
<dbReference type="PDBsum" id="3G0S"/>
<dbReference type="SMR" id="Q8ZN71"/>
<dbReference type="STRING" id="99287.STM2489"/>
<dbReference type="PaxDb" id="99287-STM2489"/>
<dbReference type="GeneID" id="1254011"/>
<dbReference type="KEGG" id="stm:STM2489"/>
<dbReference type="PATRIC" id="fig|99287.12.peg.2627"/>
<dbReference type="HOGENOM" id="CLU_049343_7_1_6"/>
<dbReference type="OMA" id="GMDACVP"/>
<dbReference type="PhylomeDB" id="Q8ZN71"/>
<dbReference type="BioCyc" id="SENT99287:STM2489-MONOMER"/>
<dbReference type="UniPathway" id="UPA00034">
    <property type="reaction ID" value="UER00017"/>
</dbReference>
<dbReference type="EvolutionaryTrace" id="Q8ZN71"/>
<dbReference type="Proteomes" id="UP000001014">
    <property type="component" value="Chromosome"/>
</dbReference>
<dbReference type="GO" id="GO:0005829">
    <property type="term" value="C:cytosol"/>
    <property type="evidence" value="ECO:0000318"/>
    <property type="project" value="GO_Central"/>
</dbReference>
<dbReference type="GO" id="GO:0008840">
    <property type="term" value="F:4-hydroxy-tetrahydrodipicolinate synthase activity"/>
    <property type="evidence" value="ECO:0000318"/>
    <property type="project" value="GO_Central"/>
</dbReference>
<dbReference type="GO" id="GO:0019877">
    <property type="term" value="P:diaminopimelate biosynthetic process"/>
    <property type="evidence" value="ECO:0007669"/>
    <property type="project" value="UniProtKB-UniRule"/>
</dbReference>
<dbReference type="GO" id="GO:0009089">
    <property type="term" value="P:lysine biosynthetic process via diaminopimelate"/>
    <property type="evidence" value="ECO:0007669"/>
    <property type="project" value="UniProtKB-UniRule"/>
</dbReference>
<dbReference type="CDD" id="cd00950">
    <property type="entry name" value="DHDPS"/>
    <property type="match status" value="1"/>
</dbReference>
<dbReference type="FunFam" id="3.20.20.70:FF:000046">
    <property type="entry name" value="4-hydroxy-tetrahydrodipicolinate synthase"/>
    <property type="match status" value="1"/>
</dbReference>
<dbReference type="Gene3D" id="3.20.20.70">
    <property type="entry name" value="Aldolase class I"/>
    <property type="match status" value="1"/>
</dbReference>
<dbReference type="HAMAP" id="MF_00418">
    <property type="entry name" value="DapA"/>
    <property type="match status" value="1"/>
</dbReference>
<dbReference type="InterPro" id="IPR013785">
    <property type="entry name" value="Aldolase_TIM"/>
</dbReference>
<dbReference type="InterPro" id="IPR005263">
    <property type="entry name" value="DapA"/>
</dbReference>
<dbReference type="InterPro" id="IPR002220">
    <property type="entry name" value="DapA-like"/>
</dbReference>
<dbReference type="InterPro" id="IPR020625">
    <property type="entry name" value="Schiff_base-form_aldolases_AS"/>
</dbReference>
<dbReference type="InterPro" id="IPR020624">
    <property type="entry name" value="Schiff_base-form_aldolases_CS"/>
</dbReference>
<dbReference type="NCBIfam" id="TIGR00674">
    <property type="entry name" value="dapA"/>
    <property type="match status" value="1"/>
</dbReference>
<dbReference type="PANTHER" id="PTHR12128:SF66">
    <property type="entry name" value="4-HYDROXY-2-OXOGLUTARATE ALDOLASE, MITOCHONDRIAL"/>
    <property type="match status" value="1"/>
</dbReference>
<dbReference type="PANTHER" id="PTHR12128">
    <property type="entry name" value="DIHYDRODIPICOLINATE SYNTHASE"/>
    <property type="match status" value="1"/>
</dbReference>
<dbReference type="Pfam" id="PF00701">
    <property type="entry name" value="DHDPS"/>
    <property type="match status" value="1"/>
</dbReference>
<dbReference type="PIRSF" id="PIRSF001365">
    <property type="entry name" value="DHDPS"/>
    <property type="match status" value="1"/>
</dbReference>
<dbReference type="PRINTS" id="PR00146">
    <property type="entry name" value="DHPICSNTHASE"/>
</dbReference>
<dbReference type="SMART" id="SM01130">
    <property type="entry name" value="DHDPS"/>
    <property type="match status" value="1"/>
</dbReference>
<dbReference type="SUPFAM" id="SSF51569">
    <property type="entry name" value="Aldolase"/>
    <property type="match status" value="1"/>
</dbReference>
<dbReference type="PROSITE" id="PS00665">
    <property type="entry name" value="DHDPS_1"/>
    <property type="match status" value="1"/>
</dbReference>
<dbReference type="PROSITE" id="PS00666">
    <property type="entry name" value="DHDPS_2"/>
    <property type="match status" value="1"/>
</dbReference>
<organism>
    <name type="scientific">Salmonella typhimurium (strain LT2 / SGSC1412 / ATCC 700720)</name>
    <dbReference type="NCBI Taxonomy" id="99287"/>
    <lineage>
        <taxon>Bacteria</taxon>
        <taxon>Pseudomonadati</taxon>
        <taxon>Pseudomonadota</taxon>
        <taxon>Gammaproteobacteria</taxon>
        <taxon>Enterobacterales</taxon>
        <taxon>Enterobacteriaceae</taxon>
        <taxon>Salmonella</taxon>
    </lineage>
</organism>
<evidence type="ECO:0000255" key="1">
    <source>
        <dbReference type="HAMAP-Rule" id="MF_00418"/>
    </source>
</evidence>
<evidence type="ECO:0000305" key="2"/>
<evidence type="ECO:0007829" key="3">
    <source>
        <dbReference type="PDB" id="3G0S"/>
    </source>
</evidence>
<keyword id="KW-0002">3D-structure</keyword>
<keyword id="KW-0028">Amino-acid biosynthesis</keyword>
<keyword id="KW-0963">Cytoplasm</keyword>
<keyword id="KW-0220">Diaminopimelate biosynthesis</keyword>
<keyword id="KW-0456">Lyase</keyword>
<keyword id="KW-0457">Lysine biosynthesis</keyword>
<keyword id="KW-1185">Reference proteome</keyword>
<keyword id="KW-0704">Schiff base</keyword>
<protein>
    <recommendedName>
        <fullName evidence="1">4-hydroxy-tetrahydrodipicolinate synthase</fullName>
        <shortName evidence="1">HTPA synthase</shortName>
        <ecNumber evidence="1">4.3.3.7</ecNumber>
    </recommendedName>
</protein>
<comment type="function">
    <text evidence="1">Catalyzes the condensation of (S)-aspartate-beta-semialdehyde [(S)-ASA] and pyruvate to 4-hydroxy-tetrahydrodipicolinate (HTPA).</text>
</comment>
<comment type="catalytic activity">
    <reaction evidence="1">
        <text>L-aspartate 4-semialdehyde + pyruvate = (2S,4S)-4-hydroxy-2,3,4,5-tetrahydrodipicolinate + H2O + H(+)</text>
        <dbReference type="Rhea" id="RHEA:34171"/>
        <dbReference type="ChEBI" id="CHEBI:15361"/>
        <dbReference type="ChEBI" id="CHEBI:15377"/>
        <dbReference type="ChEBI" id="CHEBI:15378"/>
        <dbReference type="ChEBI" id="CHEBI:67139"/>
        <dbReference type="ChEBI" id="CHEBI:537519"/>
        <dbReference type="EC" id="4.3.3.7"/>
    </reaction>
</comment>
<comment type="pathway">
    <text evidence="1">Amino-acid biosynthesis; L-lysine biosynthesis via DAP pathway; (S)-tetrahydrodipicolinate from L-aspartate: step 3/4.</text>
</comment>
<comment type="subunit">
    <text evidence="1">Homotetramer; dimer of dimers.</text>
</comment>
<comment type="subcellular location">
    <subcellularLocation>
        <location evidence="1">Cytoplasm</location>
    </subcellularLocation>
</comment>
<comment type="similarity">
    <text evidence="1">Belongs to the DapA family.</text>
</comment>
<comment type="caution">
    <text evidence="2">Was originally thought to be a dihydrodipicolinate synthase (DHDPS), catalyzing the condensation of (S)-aspartate-beta-semialdehyde [(S)-ASA] and pyruvate to dihydrodipicolinate (DHDP). However, it was shown in E.coli that the product of the enzymatic reaction is not dihydrodipicolinate but in fact (4S)-4-hydroxy-2,3,4,5-tetrahydro-(2S)-dipicolinic acid (HTPA), and that the consecutive dehydration reaction leading to DHDP is not spontaneous but catalyzed by DapB.</text>
</comment>
<sequence length="292" mass="31294">MFTGSIVALVTPMDEKGNVSRSCLKKLIDYHVANGTSAIVSVGTTGESATLSHDEHGDVVMMTLELADGRIPVIAGTGANATAEAISLTQRFNDSGIVGCLTVTPYYNRPTQEGLFQHFKAIAEHTDLPQILYNVPSRTGCDMLPETVGRLAEIKNIIAIKEATGNLTRVHQIKELVSDDFILLSGDDASALDFMQLGGHGVISVTANVAAREMADMCKLAAEGQFAEARAINQRLMPLHNKLFVEPNPIPVKWACKALGLVATDTLRLPMTPITDHGRDIVKAALQHAGLL</sequence>
<name>DAPA_SALTY</name>
<accession>Q8ZN71</accession>
<gene>
    <name evidence="1" type="primary">dapA</name>
    <name type="ordered locus">STM2489</name>
</gene>
<reference key="1">
    <citation type="journal article" date="2001" name="Nature">
        <title>Complete genome sequence of Salmonella enterica serovar Typhimurium LT2.</title>
        <authorList>
            <person name="McClelland M."/>
            <person name="Sanderson K.E."/>
            <person name="Spieth J."/>
            <person name="Clifton S.W."/>
            <person name="Latreille P."/>
            <person name="Courtney L."/>
            <person name="Porwollik S."/>
            <person name="Ali J."/>
            <person name="Dante M."/>
            <person name="Du F."/>
            <person name="Hou S."/>
            <person name="Layman D."/>
            <person name="Leonard S."/>
            <person name="Nguyen C."/>
            <person name="Scott K."/>
            <person name="Holmes A."/>
            <person name="Grewal N."/>
            <person name="Mulvaney E."/>
            <person name="Ryan E."/>
            <person name="Sun H."/>
            <person name="Florea L."/>
            <person name="Miller W."/>
            <person name="Stoneking T."/>
            <person name="Nhan M."/>
            <person name="Waterston R."/>
            <person name="Wilson R.K."/>
        </authorList>
    </citation>
    <scope>NUCLEOTIDE SEQUENCE [LARGE SCALE GENOMIC DNA]</scope>
    <source>
        <strain>LT2 / SGSC1412 / ATCC 700720</strain>
    </source>
</reference>
<proteinExistence type="evidence at protein level"/>